<reference key="1">
    <citation type="submission" date="2006-01" db="EMBL/GenBank/DDBJ databases">
        <title>Complete sequence of Anaeromyxobacter dehalogenans 2CP-C.</title>
        <authorList>
            <person name="Copeland A."/>
            <person name="Lucas S."/>
            <person name="Lapidus A."/>
            <person name="Barry K."/>
            <person name="Detter J.C."/>
            <person name="Glavina T."/>
            <person name="Hammon N."/>
            <person name="Israni S."/>
            <person name="Pitluck S."/>
            <person name="Brettin T."/>
            <person name="Bruce D."/>
            <person name="Han C."/>
            <person name="Tapia R."/>
            <person name="Gilna P."/>
            <person name="Kiss H."/>
            <person name="Schmutz J."/>
            <person name="Larimer F."/>
            <person name="Land M."/>
            <person name="Kyrpides N."/>
            <person name="Anderson I."/>
            <person name="Sanford R.A."/>
            <person name="Ritalahti K.M."/>
            <person name="Thomas H.S."/>
            <person name="Kirby J.R."/>
            <person name="Zhulin I.B."/>
            <person name="Loeffler F.E."/>
            <person name="Richardson P."/>
        </authorList>
    </citation>
    <scope>NUCLEOTIDE SEQUENCE [LARGE SCALE GENOMIC DNA]</scope>
    <source>
        <strain>2CP-C</strain>
    </source>
</reference>
<protein>
    <recommendedName>
        <fullName evidence="1">DNA-directed RNA polymerase subunit alpha</fullName>
        <shortName evidence="1">RNAP subunit alpha</shortName>
        <ecNumber evidence="1">2.7.7.6</ecNumber>
    </recommendedName>
    <alternativeName>
        <fullName evidence="1">RNA polymerase subunit alpha</fullName>
    </alternativeName>
    <alternativeName>
        <fullName evidence="1">Transcriptase subunit alpha</fullName>
    </alternativeName>
</protein>
<sequence length="339" mass="37364">MVDPIVTKNWRDLIKPRGLVVDQDSLSNTYGKFVAEPLERGFGITLGNSLRRVLLSSLQGAAITSVKVEGVEHEFMTIPEVAEDVTDIILNLKEVLLQIHTNDVKTIRIEADGPKEIKAGDLITDAQVEVLNPGHHILTISEGGRVRAEMTARRGRGYVPAERNKVPGSPIGTIPIDALFSPIRKVNYQVTNARVGQQTDYDKLTLEVWTDGSVAPADAVAFAAKIVKEQLSIFINFDEAEEPAEEIKPVEEQKLNENLFRSVDELELSVRSANCLQNANIKTIGDLVQKTEAEMLKTKNFGRKSLKEIKEILAEMGLSLGMKLENWPPKAAPQGAPKV</sequence>
<dbReference type="EC" id="2.7.7.6" evidence="1"/>
<dbReference type="EMBL" id="CP000251">
    <property type="protein sequence ID" value="ABC81690.1"/>
    <property type="molecule type" value="Genomic_DNA"/>
</dbReference>
<dbReference type="RefSeq" id="WP_011420973.1">
    <property type="nucleotide sequence ID" value="NC_007760.1"/>
</dbReference>
<dbReference type="SMR" id="Q2IJ57"/>
<dbReference type="STRING" id="290397.Adeh_1919"/>
<dbReference type="KEGG" id="ade:Adeh_1919"/>
<dbReference type="eggNOG" id="COG0202">
    <property type="taxonomic scope" value="Bacteria"/>
</dbReference>
<dbReference type="HOGENOM" id="CLU_053084_0_1_7"/>
<dbReference type="OrthoDB" id="9805706at2"/>
<dbReference type="Proteomes" id="UP000001935">
    <property type="component" value="Chromosome"/>
</dbReference>
<dbReference type="GO" id="GO:0005737">
    <property type="term" value="C:cytoplasm"/>
    <property type="evidence" value="ECO:0007669"/>
    <property type="project" value="UniProtKB-ARBA"/>
</dbReference>
<dbReference type="GO" id="GO:0000428">
    <property type="term" value="C:DNA-directed RNA polymerase complex"/>
    <property type="evidence" value="ECO:0007669"/>
    <property type="project" value="UniProtKB-KW"/>
</dbReference>
<dbReference type="GO" id="GO:0003677">
    <property type="term" value="F:DNA binding"/>
    <property type="evidence" value="ECO:0007669"/>
    <property type="project" value="UniProtKB-UniRule"/>
</dbReference>
<dbReference type="GO" id="GO:0003899">
    <property type="term" value="F:DNA-directed RNA polymerase activity"/>
    <property type="evidence" value="ECO:0007669"/>
    <property type="project" value="UniProtKB-UniRule"/>
</dbReference>
<dbReference type="GO" id="GO:0046983">
    <property type="term" value="F:protein dimerization activity"/>
    <property type="evidence" value="ECO:0007669"/>
    <property type="project" value="InterPro"/>
</dbReference>
<dbReference type="GO" id="GO:0006351">
    <property type="term" value="P:DNA-templated transcription"/>
    <property type="evidence" value="ECO:0007669"/>
    <property type="project" value="UniProtKB-UniRule"/>
</dbReference>
<dbReference type="CDD" id="cd06928">
    <property type="entry name" value="RNAP_alpha_NTD"/>
    <property type="match status" value="1"/>
</dbReference>
<dbReference type="FunFam" id="1.10.150.20:FF:000001">
    <property type="entry name" value="DNA-directed RNA polymerase subunit alpha"/>
    <property type="match status" value="1"/>
</dbReference>
<dbReference type="FunFam" id="2.170.120.12:FF:000001">
    <property type="entry name" value="DNA-directed RNA polymerase subunit alpha"/>
    <property type="match status" value="1"/>
</dbReference>
<dbReference type="Gene3D" id="1.10.150.20">
    <property type="entry name" value="5' to 3' exonuclease, C-terminal subdomain"/>
    <property type="match status" value="1"/>
</dbReference>
<dbReference type="Gene3D" id="2.170.120.12">
    <property type="entry name" value="DNA-directed RNA polymerase, insert domain"/>
    <property type="match status" value="1"/>
</dbReference>
<dbReference type="Gene3D" id="3.30.1360.10">
    <property type="entry name" value="RNA polymerase, RBP11-like subunit"/>
    <property type="match status" value="1"/>
</dbReference>
<dbReference type="HAMAP" id="MF_00059">
    <property type="entry name" value="RNApol_bact_RpoA"/>
    <property type="match status" value="1"/>
</dbReference>
<dbReference type="InterPro" id="IPR011262">
    <property type="entry name" value="DNA-dir_RNA_pol_insert"/>
</dbReference>
<dbReference type="InterPro" id="IPR011263">
    <property type="entry name" value="DNA-dir_RNA_pol_RpoA/D/Rpb3"/>
</dbReference>
<dbReference type="InterPro" id="IPR011773">
    <property type="entry name" value="DNA-dir_RpoA"/>
</dbReference>
<dbReference type="InterPro" id="IPR036603">
    <property type="entry name" value="RBP11-like"/>
</dbReference>
<dbReference type="InterPro" id="IPR011260">
    <property type="entry name" value="RNAP_asu_C"/>
</dbReference>
<dbReference type="InterPro" id="IPR036643">
    <property type="entry name" value="RNApol_insert_sf"/>
</dbReference>
<dbReference type="NCBIfam" id="NF003513">
    <property type="entry name" value="PRK05182.1-2"/>
    <property type="match status" value="1"/>
</dbReference>
<dbReference type="NCBIfam" id="NF003515">
    <property type="entry name" value="PRK05182.2-1"/>
    <property type="match status" value="1"/>
</dbReference>
<dbReference type="NCBIfam" id="NF003519">
    <property type="entry name" value="PRK05182.2-5"/>
    <property type="match status" value="1"/>
</dbReference>
<dbReference type="NCBIfam" id="TIGR02027">
    <property type="entry name" value="rpoA"/>
    <property type="match status" value="1"/>
</dbReference>
<dbReference type="Pfam" id="PF01000">
    <property type="entry name" value="RNA_pol_A_bac"/>
    <property type="match status" value="1"/>
</dbReference>
<dbReference type="Pfam" id="PF03118">
    <property type="entry name" value="RNA_pol_A_CTD"/>
    <property type="match status" value="1"/>
</dbReference>
<dbReference type="Pfam" id="PF01193">
    <property type="entry name" value="RNA_pol_L"/>
    <property type="match status" value="1"/>
</dbReference>
<dbReference type="SMART" id="SM00662">
    <property type="entry name" value="RPOLD"/>
    <property type="match status" value="1"/>
</dbReference>
<dbReference type="SUPFAM" id="SSF47789">
    <property type="entry name" value="C-terminal domain of RNA polymerase alpha subunit"/>
    <property type="match status" value="1"/>
</dbReference>
<dbReference type="SUPFAM" id="SSF56553">
    <property type="entry name" value="Insert subdomain of RNA polymerase alpha subunit"/>
    <property type="match status" value="1"/>
</dbReference>
<dbReference type="SUPFAM" id="SSF55257">
    <property type="entry name" value="RBP11-like subunits of RNA polymerase"/>
    <property type="match status" value="1"/>
</dbReference>
<proteinExistence type="inferred from homology"/>
<organism>
    <name type="scientific">Anaeromyxobacter dehalogenans (strain 2CP-C)</name>
    <dbReference type="NCBI Taxonomy" id="290397"/>
    <lineage>
        <taxon>Bacteria</taxon>
        <taxon>Pseudomonadati</taxon>
        <taxon>Myxococcota</taxon>
        <taxon>Myxococcia</taxon>
        <taxon>Myxococcales</taxon>
        <taxon>Cystobacterineae</taxon>
        <taxon>Anaeromyxobacteraceae</taxon>
        <taxon>Anaeromyxobacter</taxon>
    </lineage>
</organism>
<comment type="function">
    <text evidence="1">DNA-dependent RNA polymerase catalyzes the transcription of DNA into RNA using the four ribonucleoside triphosphates as substrates.</text>
</comment>
<comment type="catalytic activity">
    <reaction evidence="1">
        <text>RNA(n) + a ribonucleoside 5'-triphosphate = RNA(n+1) + diphosphate</text>
        <dbReference type="Rhea" id="RHEA:21248"/>
        <dbReference type="Rhea" id="RHEA-COMP:14527"/>
        <dbReference type="Rhea" id="RHEA-COMP:17342"/>
        <dbReference type="ChEBI" id="CHEBI:33019"/>
        <dbReference type="ChEBI" id="CHEBI:61557"/>
        <dbReference type="ChEBI" id="CHEBI:140395"/>
        <dbReference type="EC" id="2.7.7.6"/>
    </reaction>
</comment>
<comment type="subunit">
    <text evidence="1">Homodimer. The RNAP catalytic core consists of 2 alpha, 1 beta, 1 beta' and 1 omega subunit. When a sigma factor is associated with the core the holoenzyme is formed, which can initiate transcription.</text>
</comment>
<comment type="domain">
    <text evidence="1">The N-terminal domain is essential for RNAP assembly and basal transcription, whereas the C-terminal domain is involved in interaction with transcriptional regulators and with upstream promoter elements.</text>
</comment>
<comment type="similarity">
    <text evidence="1">Belongs to the RNA polymerase alpha chain family.</text>
</comment>
<gene>
    <name evidence="1" type="primary">rpoA</name>
    <name type="ordered locus">Adeh_1919</name>
</gene>
<evidence type="ECO:0000255" key="1">
    <source>
        <dbReference type="HAMAP-Rule" id="MF_00059"/>
    </source>
</evidence>
<accession>Q2IJ57</accession>
<feature type="chain" id="PRO_0000264480" description="DNA-directed RNA polymerase subunit alpha">
    <location>
        <begin position="1"/>
        <end position="339"/>
    </location>
</feature>
<feature type="region of interest" description="Alpha N-terminal domain (alpha-NTD)" evidence="1">
    <location>
        <begin position="1"/>
        <end position="238"/>
    </location>
</feature>
<feature type="region of interest" description="Alpha C-terminal domain (alpha-CTD)" evidence="1">
    <location>
        <begin position="250"/>
        <end position="339"/>
    </location>
</feature>
<keyword id="KW-0240">DNA-directed RNA polymerase</keyword>
<keyword id="KW-0548">Nucleotidyltransferase</keyword>
<keyword id="KW-1185">Reference proteome</keyword>
<keyword id="KW-0804">Transcription</keyword>
<keyword id="KW-0808">Transferase</keyword>
<name>RPOA_ANADE</name>